<name>TRPB_BLOPB</name>
<gene>
    <name evidence="1" type="primary">trpB</name>
    <name type="ordered locus">BPEN_442</name>
</gene>
<sequence length="396" mass="43454">MIKLKSYFGEFGGMYVPQILIPALTQLEEAFISAQDDAIFQKELKYLLNNYAGRPTPLTLCRNLTKGTRAKLYLKREDLLHGGSHKTNQVLGQALLAKRMSKTEIIAETGAGQHGVAVSIAASLLGLKCRIYMGSKDIKRQKLNVLRMQLMGTQVIPVHRGSETLKDACNEAMREWSKTYEYTHYMLGTAAGPHPFPTIVREFQRIIGKETYKQIQKYEQCLPDAIIACVGGGSNAIGIFSDFVDIPSVQLLGVEAGGLGINTEYHGAALQHGSIGIYFGMKTSILQSSEGQVKNSYSVSAGLDFPSVGPEHVYLKNTGRVQYVSINDIEAITAFKKLSIHEGIIPALESAHALAHALKIIQKQPDKAQILVVNLSGRGDKDISTVHNALQKERDK</sequence>
<dbReference type="EC" id="4.2.1.20" evidence="1"/>
<dbReference type="EMBL" id="CP000016">
    <property type="protein sequence ID" value="AAZ41061.1"/>
    <property type="molecule type" value="Genomic_DNA"/>
</dbReference>
<dbReference type="RefSeq" id="WP_011282971.1">
    <property type="nucleotide sequence ID" value="NC_007292.1"/>
</dbReference>
<dbReference type="SMR" id="Q492N6"/>
<dbReference type="STRING" id="291272.BPEN_442"/>
<dbReference type="KEGG" id="bpn:BPEN_442"/>
<dbReference type="eggNOG" id="COG0133">
    <property type="taxonomic scope" value="Bacteria"/>
</dbReference>
<dbReference type="HOGENOM" id="CLU_016734_3_1_6"/>
<dbReference type="OrthoDB" id="9766131at2"/>
<dbReference type="UniPathway" id="UPA00035">
    <property type="reaction ID" value="UER00044"/>
</dbReference>
<dbReference type="Proteomes" id="UP000007794">
    <property type="component" value="Chromosome"/>
</dbReference>
<dbReference type="GO" id="GO:0005737">
    <property type="term" value="C:cytoplasm"/>
    <property type="evidence" value="ECO:0007669"/>
    <property type="project" value="TreeGrafter"/>
</dbReference>
<dbReference type="GO" id="GO:0004834">
    <property type="term" value="F:tryptophan synthase activity"/>
    <property type="evidence" value="ECO:0007669"/>
    <property type="project" value="UniProtKB-UniRule"/>
</dbReference>
<dbReference type="CDD" id="cd06446">
    <property type="entry name" value="Trp-synth_B"/>
    <property type="match status" value="1"/>
</dbReference>
<dbReference type="FunFam" id="3.40.50.1100:FF:000001">
    <property type="entry name" value="Tryptophan synthase beta chain"/>
    <property type="match status" value="1"/>
</dbReference>
<dbReference type="FunFam" id="3.40.50.1100:FF:000004">
    <property type="entry name" value="Tryptophan synthase beta chain"/>
    <property type="match status" value="1"/>
</dbReference>
<dbReference type="Gene3D" id="3.40.50.1100">
    <property type="match status" value="2"/>
</dbReference>
<dbReference type="HAMAP" id="MF_00133">
    <property type="entry name" value="Trp_synth_beta"/>
    <property type="match status" value="1"/>
</dbReference>
<dbReference type="InterPro" id="IPR006653">
    <property type="entry name" value="Trp_synth_b_CS"/>
</dbReference>
<dbReference type="InterPro" id="IPR006654">
    <property type="entry name" value="Trp_synth_beta"/>
</dbReference>
<dbReference type="InterPro" id="IPR023026">
    <property type="entry name" value="Trp_synth_beta/beta-like"/>
</dbReference>
<dbReference type="InterPro" id="IPR001926">
    <property type="entry name" value="TrpB-like_PALP"/>
</dbReference>
<dbReference type="InterPro" id="IPR036052">
    <property type="entry name" value="TrpB-like_PALP_sf"/>
</dbReference>
<dbReference type="NCBIfam" id="TIGR00263">
    <property type="entry name" value="trpB"/>
    <property type="match status" value="1"/>
</dbReference>
<dbReference type="PANTHER" id="PTHR48077:SF3">
    <property type="entry name" value="TRYPTOPHAN SYNTHASE"/>
    <property type="match status" value="1"/>
</dbReference>
<dbReference type="PANTHER" id="PTHR48077">
    <property type="entry name" value="TRYPTOPHAN SYNTHASE-RELATED"/>
    <property type="match status" value="1"/>
</dbReference>
<dbReference type="Pfam" id="PF00291">
    <property type="entry name" value="PALP"/>
    <property type="match status" value="1"/>
</dbReference>
<dbReference type="PIRSF" id="PIRSF001413">
    <property type="entry name" value="Trp_syn_beta"/>
    <property type="match status" value="1"/>
</dbReference>
<dbReference type="SUPFAM" id="SSF53686">
    <property type="entry name" value="Tryptophan synthase beta subunit-like PLP-dependent enzymes"/>
    <property type="match status" value="1"/>
</dbReference>
<dbReference type="PROSITE" id="PS00168">
    <property type="entry name" value="TRP_SYNTHASE_BETA"/>
    <property type="match status" value="1"/>
</dbReference>
<evidence type="ECO:0000255" key="1">
    <source>
        <dbReference type="HAMAP-Rule" id="MF_00133"/>
    </source>
</evidence>
<comment type="function">
    <text evidence="1">The beta subunit is responsible for the synthesis of L-tryptophan from indole and L-serine.</text>
</comment>
<comment type="catalytic activity">
    <reaction evidence="1">
        <text>(1S,2R)-1-C-(indol-3-yl)glycerol 3-phosphate + L-serine = D-glyceraldehyde 3-phosphate + L-tryptophan + H2O</text>
        <dbReference type="Rhea" id="RHEA:10532"/>
        <dbReference type="ChEBI" id="CHEBI:15377"/>
        <dbReference type="ChEBI" id="CHEBI:33384"/>
        <dbReference type="ChEBI" id="CHEBI:57912"/>
        <dbReference type="ChEBI" id="CHEBI:58866"/>
        <dbReference type="ChEBI" id="CHEBI:59776"/>
        <dbReference type="EC" id="4.2.1.20"/>
    </reaction>
</comment>
<comment type="cofactor">
    <cofactor evidence="1">
        <name>pyridoxal 5'-phosphate</name>
        <dbReference type="ChEBI" id="CHEBI:597326"/>
    </cofactor>
</comment>
<comment type="pathway">
    <text evidence="1">Amino-acid biosynthesis; L-tryptophan biosynthesis; L-tryptophan from chorismate: step 5/5.</text>
</comment>
<comment type="subunit">
    <text evidence="1">Tetramer of two alpha and two beta chains.</text>
</comment>
<comment type="similarity">
    <text evidence="1">Belongs to the TrpB family.</text>
</comment>
<accession>Q492N6</accession>
<organism>
    <name type="scientific">Blochmanniella pennsylvanica (strain BPEN)</name>
    <dbReference type="NCBI Taxonomy" id="291272"/>
    <lineage>
        <taxon>Bacteria</taxon>
        <taxon>Pseudomonadati</taxon>
        <taxon>Pseudomonadota</taxon>
        <taxon>Gammaproteobacteria</taxon>
        <taxon>Enterobacterales</taxon>
        <taxon>Enterobacteriaceae</taxon>
        <taxon>ant endosymbionts</taxon>
        <taxon>Candidatus Blochmanniella</taxon>
    </lineage>
</organism>
<keyword id="KW-0028">Amino-acid biosynthesis</keyword>
<keyword id="KW-0057">Aromatic amino acid biosynthesis</keyword>
<keyword id="KW-0456">Lyase</keyword>
<keyword id="KW-0663">Pyridoxal phosphate</keyword>
<keyword id="KW-1185">Reference proteome</keyword>
<keyword id="KW-0822">Tryptophan biosynthesis</keyword>
<feature type="chain" id="PRO_1000076380" description="Tryptophan synthase beta chain">
    <location>
        <begin position="1"/>
        <end position="396"/>
    </location>
</feature>
<feature type="modified residue" description="N6-(pyridoxal phosphate)lysine" evidence="1">
    <location>
        <position position="86"/>
    </location>
</feature>
<reference key="1">
    <citation type="journal article" date="2005" name="Genome Res.">
        <title>Genome sequence of Blochmannia pennsylvanicus indicates parallel evolutionary trends among bacterial mutualists of insects.</title>
        <authorList>
            <person name="Degnan P.H."/>
            <person name="Lazarus A.B."/>
            <person name="Wernegreen J.J."/>
        </authorList>
    </citation>
    <scope>NUCLEOTIDE SEQUENCE [LARGE SCALE GENOMIC DNA]</scope>
    <source>
        <strain>BPEN</strain>
    </source>
</reference>
<protein>
    <recommendedName>
        <fullName evidence="1">Tryptophan synthase beta chain</fullName>
        <ecNumber evidence="1">4.2.1.20</ecNumber>
    </recommendedName>
</protein>
<proteinExistence type="inferred from homology"/>